<dbReference type="EMBL" id="BC092364">
    <property type="protein sequence ID" value="AAH92364.1"/>
    <property type="status" value="ALT_INIT"/>
    <property type="molecule type" value="mRNA"/>
</dbReference>
<dbReference type="EMBL" id="BC155547">
    <property type="protein sequence ID" value="AAI55548.1"/>
    <property type="molecule type" value="mRNA"/>
</dbReference>
<dbReference type="RefSeq" id="NP_001104618.1">
    <property type="nucleotide sequence ID" value="NM_001111148.1"/>
</dbReference>
<dbReference type="SMR" id="A9JR78"/>
<dbReference type="FunCoup" id="A9JR78">
    <property type="interactions" value="2069"/>
</dbReference>
<dbReference type="STRING" id="7955.ENSDARP00000096098"/>
<dbReference type="PaxDb" id="7955-ENSDARP00000096098"/>
<dbReference type="PeptideAtlas" id="A9JR78"/>
<dbReference type="GeneID" id="492655"/>
<dbReference type="KEGG" id="dre:492655"/>
<dbReference type="AGR" id="ZFIN:ZDB-GENE-041111-230"/>
<dbReference type="CTD" id="4796"/>
<dbReference type="ZFIN" id="ZDB-GENE-041111-230">
    <property type="gene designation" value="tonsl"/>
</dbReference>
<dbReference type="eggNOG" id="KOG0504">
    <property type="taxonomic scope" value="Eukaryota"/>
</dbReference>
<dbReference type="eggNOG" id="KOG4308">
    <property type="taxonomic scope" value="Eukaryota"/>
</dbReference>
<dbReference type="InParanoid" id="A9JR78"/>
<dbReference type="OrthoDB" id="5806726at2759"/>
<dbReference type="PhylomeDB" id="A9JR78"/>
<dbReference type="PRO" id="PR:A9JR78"/>
<dbReference type="Proteomes" id="UP000000437">
    <property type="component" value="Alternate scaffold 17"/>
</dbReference>
<dbReference type="Proteomes" id="UP000000437">
    <property type="component" value="Chromosome 17"/>
</dbReference>
<dbReference type="GO" id="GO:0005737">
    <property type="term" value="C:cytoplasm"/>
    <property type="evidence" value="ECO:0007669"/>
    <property type="project" value="UniProtKB-SubCell"/>
</dbReference>
<dbReference type="GO" id="GO:0043596">
    <property type="term" value="C:nuclear replication fork"/>
    <property type="evidence" value="ECO:0000250"/>
    <property type="project" value="UniProtKB"/>
</dbReference>
<dbReference type="GO" id="GO:0035861">
    <property type="term" value="C:site of double-strand break"/>
    <property type="evidence" value="ECO:0000250"/>
    <property type="project" value="UniProtKB"/>
</dbReference>
<dbReference type="GO" id="GO:0042393">
    <property type="term" value="F:histone binding"/>
    <property type="evidence" value="ECO:0000250"/>
    <property type="project" value="UniProtKB"/>
</dbReference>
<dbReference type="GO" id="GO:0140566">
    <property type="term" value="F:histone reader activity"/>
    <property type="evidence" value="ECO:0000250"/>
    <property type="project" value="UniProtKB"/>
</dbReference>
<dbReference type="GO" id="GO:0000724">
    <property type="term" value="P:double-strand break repair via homologous recombination"/>
    <property type="evidence" value="ECO:0000250"/>
    <property type="project" value="UniProtKB"/>
</dbReference>
<dbReference type="GO" id="GO:0031297">
    <property type="term" value="P:replication fork processing"/>
    <property type="evidence" value="ECO:0000250"/>
    <property type="project" value="UniProtKB"/>
</dbReference>
<dbReference type="FunFam" id="1.25.40.20:FF:000151">
    <property type="entry name" value="Tonsoku like, DNA repair protein"/>
    <property type="match status" value="1"/>
</dbReference>
<dbReference type="FunFam" id="1.25.40.10:FF:001517">
    <property type="entry name" value="Tonsoku-like protein"/>
    <property type="match status" value="1"/>
</dbReference>
<dbReference type="Gene3D" id="1.25.40.20">
    <property type="entry name" value="Ankyrin repeat-containing domain"/>
    <property type="match status" value="1"/>
</dbReference>
<dbReference type="Gene3D" id="3.80.10.10">
    <property type="entry name" value="Ribonuclease Inhibitor"/>
    <property type="match status" value="1"/>
</dbReference>
<dbReference type="Gene3D" id="1.25.40.10">
    <property type="entry name" value="Tetratricopeptide repeat domain"/>
    <property type="match status" value="2"/>
</dbReference>
<dbReference type="InterPro" id="IPR002110">
    <property type="entry name" value="Ankyrin_rpt"/>
</dbReference>
<dbReference type="InterPro" id="IPR036770">
    <property type="entry name" value="Ankyrin_rpt-contain_sf"/>
</dbReference>
<dbReference type="InterPro" id="IPR001611">
    <property type="entry name" value="Leu-rich_rpt"/>
</dbReference>
<dbReference type="InterPro" id="IPR006553">
    <property type="entry name" value="Leu-rich_rpt_Cys-con_subtyp"/>
</dbReference>
<dbReference type="InterPro" id="IPR032675">
    <property type="entry name" value="LRR_dom_sf"/>
</dbReference>
<dbReference type="InterPro" id="IPR052311">
    <property type="entry name" value="MMS22L-TONSL_complex_comp"/>
</dbReference>
<dbReference type="InterPro" id="IPR011990">
    <property type="entry name" value="TPR-like_helical_dom_sf"/>
</dbReference>
<dbReference type="InterPro" id="IPR019734">
    <property type="entry name" value="TPR_rpt"/>
</dbReference>
<dbReference type="PANTHER" id="PTHR46358">
    <property type="entry name" value="TONSOKU-LIKE PROTEIN"/>
    <property type="match status" value="1"/>
</dbReference>
<dbReference type="PANTHER" id="PTHR46358:SF1">
    <property type="entry name" value="TONSOKU-LIKE PROTEIN"/>
    <property type="match status" value="1"/>
</dbReference>
<dbReference type="Pfam" id="PF00023">
    <property type="entry name" value="Ank"/>
    <property type="match status" value="1"/>
</dbReference>
<dbReference type="Pfam" id="PF12796">
    <property type="entry name" value="Ank_2"/>
    <property type="match status" value="1"/>
</dbReference>
<dbReference type="Pfam" id="PF13516">
    <property type="entry name" value="LRR_6"/>
    <property type="match status" value="2"/>
</dbReference>
<dbReference type="Pfam" id="PF13424">
    <property type="entry name" value="TPR_12"/>
    <property type="match status" value="1"/>
</dbReference>
<dbReference type="Pfam" id="PF13176">
    <property type="entry name" value="TPR_7"/>
    <property type="match status" value="1"/>
</dbReference>
<dbReference type="Pfam" id="PF13181">
    <property type="entry name" value="TPR_8"/>
    <property type="match status" value="1"/>
</dbReference>
<dbReference type="SMART" id="SM00248">
    <property type="entry name" value="ANK"/>
    <property type="match status" value="3"/>
</dbReference>
<dbReference type="SMART" id="SM00367">
    <property type="entry name" value="LRR_CC"/>
    <property type="match status" value="3"/>
</dbReference>
<dbReference type="SMART" id="SM00368">
    <property type="entry name" value="LRR_RI"/>
    <property type="match status" value="4"/>
</dbReference>
<dbReference type="SMART" id="SM00028">
    <property type="entry name" value="TPR"/>
    <property type="match status" value="8"/>
</dbReference>
<dbReference type="SUPFAM" id="SSF48403">
    <property type="entry name" value="Ankyrin repeat"/>
    <property type="match status" value="1"/>
</dbReference>
<dbReference type="SUPFAM" id="SSF52047">
    <property type="entry name" value="RNI-like"/>
    <property type="match status" value="1"/>
</dbReference>
<dbReference type="SUPFAM" id="SSF48452">
    <property type="entry name" value="TPR-like"/>
    <property type="match status" value="3"/>
</dbReference>
<dbReference type="PROSITE" id="PS50297">
    <property type="entry name" value="ANK_REP_REGION"/>
    <property type="match status" value="1"/>
</dbReference>
<dbReference type="PROSITE" id="PS50088">
    <property type="entry name" value="ANK_REPEAT"/>
    <property type="match status" value="3"/>
</dbReference>
<dbReference type="PROSITE" id="PS50005">
    <property type="entry name" value="TPR"/>
    <property type="match status" value="7"/>
</dbReference>
<dbReference type="PROSITE" id="PS50293">
    <property type="entry name" value="TPR_REGION"/>
    <property type="match status" value="3"/>
</dbReference>
<organism>
    <name type="scientific">Danio rerio</name>
    <name type="common">Zebrafish</name>
    <name type="synonym">Brachydanio rerio</name>
    <dbReference type="NCBI Taxonomy" id="7955"/>
    <lineage>
        <taxon>Eukaryota</taxon>
        <taxon>Metazoa</taxon>
        <taxon>Chordata</taxon>
        <taxon>Craniata</taxon>
        <taxon>Vertebrata</taxon>
        <taxon>Euteleostomi</taxon>
        <taxon>Actinopterygii</taxon>
        <taxon>Neopterygii</taxon>
        <taxon>Teleostei</taxon>
        <taxon>Ostariophysi</taxon>
        <taxon>Cypriniformes</taxon>
        <taxon>Danionidae</taxon>
        <taxon>Danioninae</taxon>
        <taxon>Danio</taxon>
    </lineage>
</organism>
<reference key="1">
    <citation type="submission" date="2007-12" db="EMBL/GenBank/DDBJ databases">
        <authorList>
            <consortium name="NIH - Zebrafish Gene Collection (ZGC) project"/>
        </authorList>
    </citation>
    <scope>NUCLEOTIDE SEQUENCE [LARGE SCALE MRNA]</scope>
    <source>
        <strain>AB</strain>
        <tissue>Embryo</tissue>
    </source>
</reference>
<reference key="2">
    <citation type="journal article" date="2019" name="Am. J. Hum. Genet.">
        <title>Bi-allelic variants in TONSL cause sponastrime dysplasia and a spectrum of skeletal dysplasia phenotypes.</title>
        <authorList>
            <consortium name="University of Washington Center for Mendelian Genomics"/>
            <consortium name="Undiagnosed Diseases Network"/>
            <person name="Burrage L.C."/>
            <person name="Reynolds J.J."/>
            <person name="Baratang N.V."/>
            <person name="Phillips J.B."/>
            <person name="Wegner J."/>
            <person name="McFarquhar A."/>
            <person name="Higgs M.R."/>
            <person name="Christiansen A.E."/>
            <person name="Lanza D.G."/>
            <person name="Seavitt J.R."/>
            <person name="Jain M."/>
            <person name="Li X."/>
            <person name="Parry D.A."/>
            <person name="Raman V."/>
            <person name="Chitayat D."/>
            <person name="Chinn I.K."/>
            <person name="Bertuch A.A."/>
            <person name="Karaviti L."/>
            <person name="Schlesinger A.E."/>
            <person name="Earl D."/>
            <person name="Bamshad M."/>
            <person name="Savarirayan R."/>
            <person name="Doddapaneni H."/>
            <person name="Muzny D."/>
            <person name="Jhangiani S.N."/>
            <person name="Eng C.M."/>
            <person name="Gibbs R.A."/>
            <person name="Bi W."/>
            <person name="Emrick L."/>
            <person name="Rosenfeld J.A."/>
            <person name="Postlethwait J."/>
            <person name="Westerfield M."/>
            <person name="Dickinson M.E."/>
            <person name="Beaudet A.L."/>
            <person name="Ranza E."/>
            <person name="Huber C."/>
            <person name="Cormier-Daire V."/>
            <person name="Shen W."/>
            <person name="Mao R."/>
            <person name="Heaney J.D."/>
            <person name="Orange J.S."/>
            <person name="Bertola D."/>
            <person name="Yamamoto G.L."/>
            <person name="Baratela W.A.R."/>
            <person name="Butler M.G."/>
            <person name="Ali A."/>
            <person name="Adeli M."/>
            <person name="Cohn D.H."/>
            <person name="Krakow D."/>
            <person name="Jackson A.P."/>
            <person name="Lees M."/>
            <person name="Offiah A.C."/>
            <person name="Carlston C.M."/>
            <person name="Carey J.C."/>
            <person name="Stewart G.S."/>
            <person name="Bacino C.A."/>
            <person name="Campeau P.M."/>
            <person name="Lee B."/>
        </authorList>
    </citation>
    <scope>DISRUPTION PHENOTYPE</scope>
</reference>
<sequence length="1427" mass="158305">MTSTKEIKQLQKAKSKAQSSNNLKEEASLCNQLGEVYAKTGDYQAAIEEHRQELALSEILHDVIGSAVANRKIGECYAELGNIEAALKHQRLHLNLARSVHDAAEEQRALATIGRTYLFLFDSDQSANSLKHAEDAFKRSLAIVDERLEGTVSPREISEMKARLLLNLGCVYDGMKEPQRCSDLIRQSIYIAEKNNLLEDLYRANFNLGSIHFRNGQHSRAMRCFEQSKECARKMKDKFSESECFHSIGKILLHLGDFSAARRSLKKAFCLGSQQPSDREAVKKDFRHAIRGCQLEQTAAEVTQKFSHEALDLSEQLGDLYCKVGCYSKALEAYQTQLACAEALAKPARELAVIHVSLAATYTDLRQHHRAVEHYRQELQLRKGNPKEECETWLNMAVCQEEMCQSMETLDHCFTSALNCAEKSGLNKLQRRVLRVWLQAQRRCGSSQCDDTEARLMELCERDGLSLDQSEDEDEEDEVDNSEPLEDSDIQYSESDDEDLEGYDKMVTGRRKTQRWNRRNEKGETVLHRACIEGNLKQVQYLIEQGHPVNVRDYCGWTPLHESCNYGHQEIVAFLLDRGANVNDPGGRECGGITPLHDTLSCGHFSVARLLVLRGASVTVRNSKGHTPLDTLRQWFKTYSGQLDPETKQECLETEKLIKRALSGDVSVVCAAPRQQKELQDSQLFDAEYSEPLLRESPPSPPPITRPAATVPTSKDSAPKHRSTSASTRRPRGMEVDVLYGDDSSSSDNPDSDCSLSPLRPVRSRPRSPPAQSPQEVPSSQELPSVYGIKETTVPPQSESGRLEYQKAMQNLGSAKSRLFSQSLSDPAFTSTPAVSANSRAALVPEDQYLADDWLEDDLIDMQPKKKRRVSEHNATRETTSRSQNNSSTIAEVPPRVQSCSSRGSLSLKKGSNKPRQVKMNQLPGMVMLGRREVSRSQSPIMTQESDHIQEPAPPSHQAMPPASFQNRAAHVPAPIRMRVKVQDNVFLIPVPHSEADSCTVAWLCDQAAQRYYQMCGLLPRLSLQKEGALLLPTDPLLAVLHTNEEVLAEVCSWDLPPLPERYRKACESLGVEENRRVSRVCEVQDSSSCVSVCGLSLSPASLNPLLRALKLQASLTELRISANRLNDELLPEMMAAAATMPRLRVLDISANQITGEGLRKASDAFETRSQAAFPCLEELNLSMNPLGDGWTQALASLLSSCPLLSSLSLQACGLSARFLQQHRLLLANAMASTGNMRSVCLSHNALGSTGFELVLKTLPMHCLTHLELSAVCRGPSDQPSMEILTKLLAQGDCPLTHLNLSGNGLTDHSVLLLARCLPVCPSLVSLDLSANPLVTSTGLHSLLNGLVEARRPLGHLNLQGCQVSGPLAEDCLDSLSDHIRDLRLCSQSLNKLDQDALQQSWKRRTEAVHIFSRNSKCMLSISSPSH</sequence>
<proteinExistence type="evidence at transcript level"/>
<accession>A9JR78</accession>
<accession>Q569P2</accession>
<feature type="chain" id="PRO_0000326636" description="Tonsoku-like protein">
    <location>
        <begin position="1"/>
        <end position="1427"/>
    </location>
</feature>
<feature type="repeat" description="TPR 1">
    <location>
        <begin position="27"/>
        <end position="60"/>
    </location>
</feature>
<feature type="repeat" description="TPR 2">
    <location>
        <begin position="67"/>
        <end position="100"/>
    </location>
</feature>
<feature type="repeat" description="TPR 3">
    <location>
        <begin position="107"/>
        <end position="147"/>
    </location>
</feature>
<feature type="repeat" description="TPR 4">
    <location>
        <begin position="162"/>
        <end position="195"/>
    </location>
</feature>
<feature type="repeat" description="TPR 5">
    <location>
        <begin position="202"/>
        <end position="235"/>
    </location>
</feature>
<feature type="repeat" description="TPR 6">
    <location>
        <begin position="242"/>
        <end position="275"/>
    </location>
</feature>
<feature type="repeat" description="TPR 7">
    <location>
        <begin position="311"/>
        <end position="344"/>
    </location>
</feature>
<feature type="repeat" description="TPR 8">
    <location>
        <begin position="352"/>
        <end position="385"/>
    </location>
</feature>
<feature type="repeat" description="ANK 1">
    <location>
        <begin position="522"/>
        <end position="551"/>
    </location>
</feature>
<feature type="repeat" description="ANK 2">
    <location>
        <begin position="555"/>
        <end position="584"/>
    </location>
</feature>
<feature type="repeat" description="ANK 3">
    <location>
        <begin position="591"/>
        <end position="620"/>
    </location>
</feature>
<feature type="repeat" description="LRR 1">
    <location>
        <begin position="1113"/>
        <end position="1137"/>
    </location>
</feature>
<feature type="repeat" description="LRR 2">
    <location>
        <begin position="1141"/>
        <end position="1168"/>
    </location>
</feature>
<feature type="repeat" description="LRR 3">
    <location>
        <begin position="1174"/>
        <end position="1197"/>
    </location>
</feature>
<feature type="repeat" description="LRR 4">
    <location>
        <begin position="1234"/>
        <end position="1258"/>
    </location>
</feature>
<feature type="repeat" description="LRR 5">
    <location>
        <begin position="1293"/>
        <end position="1316"/>
    </location>
</feature>
<feature type="repeat" description="LRR 6">
    <location>
        <begin position="1321"/>
        <end position="1346"/>
    </location>
</feature>
<feature type="repeat" description="LRR 7">
    <location>
        <begin position="1377"/>
        <end position="1400"/>
    </location>
</feature>
<feature type="region of interest" description="Disordered" evidence="2">
    <location>
        <begin position="1"/>
        <end position="21"/>
    </location>
</feature>
<feature type="region of interest" description="Disordered" evidence="2">
    <location>
        <begin position="465"/>
        <end position="502"/>
    </location>
</feature>
<feature type="region of interest" description="Disordered" evidence="2">
    <location>
        <begin position="692"/>
        <end position="801"/>
    </location>
</feature>
<feature type="region of interest" description="Disordered" evidence="2">
    <location>
        <begin position="865"/>
        <end position="922"/>
    </location>
</feature>
<feature type="region of interest" description="Disordered" evidence="2">
    <location>
        <begin position="941"/>
        <end position="961"/>
    </location>
</feature>
<feature type="compositionally biased region" description="Low complexity" evidence="2">
    <location>
        <begin position="10"/>
        <end position="21"/>
    </location>
</feature>
<feature type="compositionally biased region" description="Acidic residues" evidence="2">
    <location>
        <begin position="469"/>
        <end position="501"/>
    </location>
</feature>
<feature type="compositionally biased region" description="Low complexity" evidence="2">
    <location>
        <begin position="742"/>
        <end position="761"/>
    </location>
</feature>
<feature type="compositionally biased region" description="Polar residues" evidence="2">
    <location>
        <begin position="773"/>
        <end position="783"/>
    </location>
</feature>
<feature type="compositionally biased region" description="Basic and acidic residues" evidence="2">
    <location>
        <begin position="871"/>
        <end position="880"/>
    </location>
</feature>
<feature type="compositionally biased region" description="Polar residues" evidence="2">
    <location>
        <begin position="881"/>
        <end position="890"/>
    </location>
</feature>
<feature type="compositionally biased region" description="Low complexity" evidence="2">
    <location>
        <begin position="899"/>
        <end position="910"/>
    </location>
</feature>
<feature type="sequence conflict" description="In Ref. 1; AAH92364." evidence="4" ref="1">
    <original>E</original>
    <variation>Q</variation>
    <location>
        <position position="1068"/>
    </location>
</feature>
<feature type="sequence conflict" description="In Ref. 1; AAH92364." evidence="4" ref="1">
    <original>G</original>
    <variation>E</variation>
    <location>
        <position position="1305"/>
    </location>
</feature>
<feature type="sequence conflict" description="In Ref. 1; AAH92364." evidence="4" ref="1">
    <original>V</original>
    <variation>M</variation>
    <location>
        <position position="1348"/>
    </location>
</feature>
<name>TONSL_DANRE</name>
<keyword id="KW-0040">ANK repeat</keyword>
<keyword id="KW-0156">Chromatin regulator</keyword>
<keyword id="KW-0158">Chromosome</keyword>
<keyword id="KW-0963">Cytoplasm</keyword>
<keyword id="KW-0227">DNA damage</keyword>
<keyword id="KW-0234">DNA repair</keyword>
<keyword id="KW-0433">Leucine-rich repeat</keyword>
<keyword id="KW-0539">Nucleus</keyword>
<keyword id="KW-1185">Reference proteome</keyword>
<keyword id="KW-0677">Repeat</keyword>
<keyword id="KW-0802">TPR repeat</keyword>
<protein>
    <recommendedName>
        <fullName evidence="4">Tonsoku-like protein</fullName>
    </recommendedName>
    <alternativeName>
        <fullName>NF-kappa-B inhibitor-like protein 2</fullName>
    </alternativeName>
    <alternativeName>
        <fullName>Nuclear factor of kappa light polypeptide gene enhancer in B-cells inhibitor-like 2</fullName>
    </alternativeName>
</protein>
<gene>
    <name type="primary">tonsl</name>
    <name type="synonym">nfkbil2</name>
    <name type="ORF">im:7145273</name>
    <name type="ORF">zgc:171416</name>
</gene>
<evidence type="ECO:0000250" key="1">
    <source>
        <dbReference type="UniProtKB" id="Q96HA7"/>
    </source>
</evidence>
<evidence type="ECO:0000256" key="2">
    <source>
        <dbReference type="SAM" id="MobiDB-lite"/>
    </source>
</evidence>
<evidence type="ECO:0000269" key="3">
    <source>
    </source>
</evidence>
<evidence type="ECO:0000305" key="4"/>
<comment type="function">
    <text evidence="1">Component of the MMS22L-TONSL complex, a complex that promotes homologous recombination-mediated repair of double-strand breaks (DSBs) at stalled or collapsed replication forks. The MMS22L-TONSL complex is required to maintain genome integrity during DNA replication. It mediates the assembly of RAD51 filaments on single-stranded DNA (ssDNA): the MMS22L-TONSL complex is recruited to DSBs following histone replacement by histone chaperones and eviction of the replication protein A complex (RPA/RP-A) from DSBs. Following recruitment to DSBs, the TONSL-MMS22L complex promotes recruitment of RAD51 filaments and subsequent homologous recombination. Within the complex, TONSL acts as a histone reader, which recognizes and binds newly synthesized histones following their replacement by histone chaperones.</text>
</comment>
<comment type="subunit">
    <text evidence="1">Component of the MMS22L-TONSL complex. Binds histones, with a strong preference for histone H3.1 (histones H3.1 and H3-4/H3.1t).</text>
</comment>
<comment type="subcellular location">
    <subcellularLocation>
        <location evidence="1">Nucleus</location>
    </subcellularLocation>
    <subcellularLocation>
        <location evidence="1">Chromosome</location>
    </subcellularLocation>
    <subcellularLocation>
        <location evidence="1">Cytoplasm</location>
    </subcellularLocation>
    <text evidence="1">Mainly nuclear. Localizes to DNA damage sites, accumulates at stressed replication forks. Recruited to stalled or collapsed replication forks following histone replacement by histone chaperones: TONSL acts as a histone reader that recognizes and binds newly synthesized histones.</text>
</comment>
<comment type="disruption phenotype">
    <text evidence="3">Tonsl deficiency causes growth deficits, vertebral abnormalities, reduced neutrophil numbers, and death at early stages of larvae development.</text>
</comment>
<comment type="similarity">
    <text evidence="4">Belongs to the Tonsoku family.</text>
</comment>
<comment type="sequence caution" evidence="4">
    <conflict type="erroneous initiation">
        <sequence resource="EMBL-CDS" id="AAH92364"/>
    </conflict>
    <text>Extended N-terminus.</text>
</comment>